<proteinExistence type="inferred from homology"/>
<evidence type="ECO:0000255" key="1"/>
<evidence type="ECO:0000305" key="2"/>
<accession>C6C4L9</accession>
<comment type="subcellular location">
    <subcellularLocation>
        <location evidence="2">Cell membrane</location>
        <topology evidence="2">Multi-pass membrane protein</topology>
    </subcellularLocation>
</comment>
<comment type="similarity">
    <text evidence="2">Belongs to the AaeX family.</text>
</comment>
<sequence>MHSLPVMVLFGLSFPPIFFVLLVSLTLFFICIRLLHSSGIYEWVWHPALFNTSLFCCLFYLLFHLGV</sequence>
<organism>
    <name type="scientific">Musicola paradisiaca (strain Ech703)</name>
    <name type="common">Dickeya paradisiaca</name>
    <name type="synonym">Dickeya dadantii</name>
    <dbReference type="NCBI Taxonomy" id="579405"/>
    <lineage>
        <taxon>Bacteria</taxon>
        <taxon>Pseudomonadati</taxon>
        <taxon>Pseudomonadota</taxon>
        <taxon>Gammaproteobacteria</taxon>
        <taxon>Enterobacterales</taxon>
        <taxon>Pectobacteriaceae</taxon>
        <taxon>Musicola</taxon>
    </lineage>
</organism>
<keyword id="KW-1003">Cell membrane</keyword>
<keyword id="KW-0472">Membrane</keyword>
<keyword id="KW-0812">Transmembrane</keyword>
<keyword id="KW-1133">Transmembrane helix</keyword>
<reference key="1">
    <citation type="submission" date="2009-06" db="EMBL/GenBank/DDBJ databases">
        <title>Complete sequence of Dickeya dadantii Ech703.</title>
        <authorList>
            <consortium name="US DOE Joint Genome Institute"/>
            <person name="Lucas S."/>
            <person name="Copeland A."/>
            <person name="Lapidus A."/>
            <person name="Glavina del Rio T."/>
            <person name="Dalin E."/>
            <person name="Tice H."/>
            <person name="Bruce D."/>
            <person name="Goodwin L."/>
            <person name="Pitluck S."/>
            <person name="Chertkov O."/>
            <person name="Brettin T."/>
            <person name="Detter J.C."/>
            <person name="Han C."/>
            <person name="Larimer F."/>
            <person name="Land M."/>
            <person name="Hauser L."/>
            <person name="Kyrpides N."/>
            <person name="Mikhailova N."/>
            <person name="Balakrishnan V."/>
            <person name="Glasner J."/>
            <person name="Perna N.T."/>
        </authorList>
    </citation>
    <scope>NUCLEOTIDE SEQUENCE [LARGE SCALE GENOMIC DNA]</scope>
    <source>
        <strain>Ech703</strain>
    </source>
</reference>
<name>AAEX_MUSP7</name>
<feature type="chain" id="PRO_0000414008" description="Protein AaeX">
    <location>
        <begin position="1"/>
        <end position="67"/>
    </location>
</feature>
<feature type="transmembrane region" description="Helical" evidence="1">
    <location>
        <begin position="10"/>
        <end position="30"/>
    </location>
</feature>
<feature type="transmembrane region" description="Helical" evidence="1">
    <location>
        <begin position="43"/>
        <end position="63"/>
    </location>
</feature>
<protein>
    <recommendedName>
        <fullName>Protein AaeX</fullName>
    </recommendedName>
</protein>
<gene>
    <name type="primary">aaeX</name>
    <name type="ordered locus">Dd703_3669</name>
</gene>
<dbReference type="EMBL" id="CP001654">
    <property type="protein sequence ID" value="ACS87426.1"/>
    <property type="molecule type" value="Genomic_DNA"/>
</dbReference>
<dbReference type="RefSeq" id="WP_015855323.1">
    <property type="nucleotide sequence ID" value="NC_012880.1"/>
</dbReference>
<dbReference type="STRING" id="579405.Dd703_3669"/>
<dbReference type="KEGG" id="dda:Dd703_3669"/>
<dbReference type="eggNOG" id="ENOG5032YJX">
    <property type="taxonomic scope" value="Bacteria"/>
</dbReference>
<dbReference type="HOGENOM" id="CLU_188292_0_0_6"/>
<dbReference type="Proteomes" id="UP000002734">
    <property type="component" value="Chromosome"/>
</dbReference>
<dbReference type="GO" id="GO:0005886">
    <property type="term" value="C:plasma membrane"/>
    <property type="evidence" value="ECO:0007669"/>
    <property type="project" value="UniProtKB-SubCell"/>
</dbReference>
<dbReference type="InterPro" id="IPR012451">
    <property type="entry name" value="DUF1656"/>
</dbReference>
<dbReference type="NCBIfam" id="NF008615">
    <property type="entry name" value="PRK11594.1"/>
    <property type="match status" value="1"/>
</dbReference>
<dbReference type="Pfam" id="PF07869">
    <property type="entry name" value="DUF1656"/>
    <property type="match status" value="1"/>
</dbReference>